<gene>
    <name evidence="1" type="primary">ilvD</name>
    <name type="ordered locus">Francci3_4515</name>
</gene>
<sequence>MPALRSRTTTHGRNMAGARALWRATGMTDDDFGKPIVAVANSFTEFVPGHVHLRNLGSLVAGAVAEAGGVAREFNTIAVDDGIAMGHGGMLYSLPSRELIADSVEYMVNAHCADALVCISNCDKITPGMLLAALRLNIPTVFVSGGAMESGNAVISGGTARSRLDLITAMSAAVNPDVSDGDLSTIERSACPTCGSCSGMFTANSMNCLTEAIGLSLPGNGSTLATAAARRELFVEAGRLVVDLARRYYEKDDEAVLPRSIATAAAFRNAFAVDVAMGGSTNTVLHLLAAAVEAGVDVTLADIDQISRTVPCLCKVAPSSTRYYMEDVHRAGGIPAILGELDRAGLLDPDPHTVHSASLREFLDRWDVRGPSPSPDAIELFHAAPGGVRTIEPFSSTNRWDTLDTDARDGCIRSVEHAYSAEGGLAVLFGNLAVEGAVVKTAGVDEGQWTFRGPALVVESQEEAVDAILTGRVKAGNVIIVRYEGPRGGPGMQEMLYPTAFLKGRGLGPKCALITDGRFSGGSSGLSIGHVSPEAAHGGTIALVRDGDIIEIDIPARRLELVVSDEELASRRAALEAAGGYRPTGRERPVSMALRAYAAMATSASTGAARDVGLLGG</sequence>
<reference key="1">
    <citation type="journal article" date="2007" name="Genome Res.">
        <title>Genome characteristics of facultatively symbiotic Frankia sp. strains reflect host range and host plant biogeography.</title>
        <authorList>
            <person name="Normand P."/>
            <person name="Lapierre P."/>
            <person name="Tisa L.S."/>
            <person name="Gogarten J.P."/>
            <person name="Alloisio N."/>
            <person name="Bagnarol E."/>
            <person name="Bassi C.A."/>
            <person name="Berry A.M."/>
            <person name="Bickhart D.M."/>
            <person name="Choisne N."/>
            <person name="Couloux A."/>
            <person name="Cournoyer B."/>
            <person name="Cruveiller S."/>
            <person name="Daubin V."/>
            <person name="Demange N."/>
            <person name="Francino M.P."/>
            <person name="Goltsman E."/>
            <person name="Huang Y."/>
            <person name="Kopp O.R."/>
            <person name="Labarre L."/>
            <person name="Lapidus A."/>
            <person name="Lavire C."/>
            <person name="Marechal J."/>
            <person name="Martinez M."/>
            <person name="Mastronunzio J.E."/>
            <person name="Mullin B.C."/>
            <person name="Niemann J."/>
            <person name="Pujic P."/>
            <person name="Rawnsley T."/>
            <person name="Rouy Z."/>
            <person name="Schenowitz C."/>
            <person name="Sellstedt A."/>
            <person name="Tavares F."/>
            <person name="Tomkins J.P."/>
            <person name="Vallenet D."/>
            <person name="Valverde C."/>
            <person name="Wall L.G."/>
            <person name="Wang Y."/>
            <person name="Medigue C."/>
            <person name="Benson D.R."/>
        </authorList>
    </citation>
    <scope>NUCLEOTIDE SEQUENCE [LARGE SCALE GENOMIC DNA]</scope>
    <source>
        <strain>DSM 45818 / CECT 9043 / HFP020203 / CcI3</strain>
    </source>
</reference>
<organism>
    <name type="scientific">Frankia casuarinae (strain DSM 45818 / CECT 9043 / HFP020203 / CcI3)</name>
    <dbReference type="NCBI Taxonomy" id="106370"/>
    <lineage>
        <taxon>Bacteria</taxon>
        <taxon>Bacillati</taxon>
        <taxon>Actinomycetota</taxon>
        <taxon>Actinomycetes</taxon>
        <taxon>Frankiales</taxon>
        <taxon>Frankiaceae</taxon>
        <taxon>Frankia</taxon>
    </lineage>
</organism>
<dbReference type="EC" id="4.2.1.9" evidence="1"/>
<dbReference type="EMBL" id="CP000249">
    <property type="protein sequence ID" value="ABD13861.1"/>
    <property type="molecule type" value="Genomic_DNA"/>
</dbReference>
<dbReference type="RefSeq" id="WP_011438869.1">
    <property type="nucleotide sequence ID" value="NZ_JENI01000001.1"/>
</dbReference>
<dbReference type="SMR" id="Q2J4D1"/>
<dbReference type="STRING" id="106370.Francci3_4515"/>
<dbReference type="KEGG" id="fra:Francci3_4515"/>
<dbReference type="eggNOG" id="COG0129">
    <property type="taxonomic scope" value="Bacteria"/>
</dbReference>
<dbReference type="HOGENOM" id="CLU_014271_4_2_11"/>
<dbReference type="OrthoDB" id="9807077at2"/>
<dbReference type="PhylomeDB" id="Q2J4D1"/>
<dbReference type="UniPathway" id="UPA00047">
    <property type="reaction ID" value="UER00057"/>
</dbReference>
<dbReference type="UniPathway" id="UPA00049">
    <property type="reaction ID" value="UER00061"/>
</dbReference>
<dbReference type="Proteomes" id="UP000001937">
    <property type="component" value="Chromosome"/>
</dbReference>
<dbReference type="GO" id="GO:0005829">
    <property type="term" value="C:cytosol"/>
    <property type="evidence" value="ECO:0007669"/>
    <property type="project" value="TreeGrafter"/>
</dbReference>
<dbReference type="GO" id="GO:0051537">
    <property type="term" value="F:2 iron, 2 sulfur cluster binding"/>
    <property type="evidence" value="ECO:0007669"/>
    <property type="project" value="UniProtKB-UniRule"/>
</dbReference>
<dbReference type="GO" id="GO:0004160">
    <property type="term" value="F:dihydroxy-acid dehydratase activity"/>
    <property type="evidence" value="ECO:0007669"/>
    <property type="project" value="UniProtKB-UniRule"/>
</dbReference>
<dbReference type="GO" id="GO:0000287">
    <property type="term" value="F:magnesium ion binding"/>
    <property type="evidence" value="ECO:0007669"/>
    <property type="project" value="UniProtKB-UniRule"/>
</dbReference>
<dbReference type="GO" id="GO:0009097">
    <property type="term" value="P:isoleucine biosynthetic process"/>
    <property type="evidence" value="ECO:0007669"/>
    <property type="project" value="UniProtKB-UniRule"/>
</dbReference>
<dbReference type="GO" id="GO:0009099">
    <property type="term" value="P:L-valine biosynthetic process"/>
    <property type="evidence" value="ECO:0007669"/>
    <property type="project" value="UniProtKB-UniRule"/>
</dbReference>
<dbReference type="FunFam" id="3.50.30.80:FF:000001">
    <property type="entry name" value="Dihydroxy-acid dehydratase"/>
    <property type="match status" value="1"/>
</dbReference>
<dbReference type="Gene3D" id="3.50.30.80">
    <property type="entry name" value="IlvD/EDD C-terminal domain-like"/>
    <property type="match status" value="1"/>
</dbReference>
<dbReference type="HAMAP" id="MF_00012">
    <property type="entry name" value="IlvD"/>
    <property type="match status" value="1"/>
</dbReference>
<dbReference type="InterPro" id="IPR042096">
    <property type="entry name" value="Dihydro-acid_dehy_C"/>
</dbReference>
<dbReference type="InterPro" id="IPR004404">
    <property type="entry name" value="DihydroxyA_deHydtase"/>
</dbReference>
<dbReference type="InterPro" id="IPR020558">
    <property type="entry name" value="DiOHA_6PGluconate_deHydtase_CS"/>
</dbReference>
<dbReference type="InterPro" id="IPR056740">
    <property type="entry name" value="ILV_EDD_C"/>
</dbReference>
<dbReference type="InterPro" id="IPR000581">
    <property type="entry name" value="ILV_EDD_N"/>
</dbReference>
<dbReference type="InterPro" id="IPR037237">
    <property type="entry name" value="IlvD/EDD_N"/>
</dbReference>
<dbReference type="NCBIfam" id="TIGR00110">
    <property type="entry name" value="ilvD"/>
    <property type="match status" value="1"/>
</dbReference>
<dbReference type="NCBIfam" id="NF009103">
    <property type="entry name" value="PRK12448.1"/>
    <property type="match status" value="1"/>
</dbReference>
<dbReference type="PANTHER" id="PTHR43661">
    <property type="entry name" value="D-XYLONATE DEHYDRATASE"/>
    <property type="match status" value="1"/>
</dbReference>
<dbReference type="PANTHER" id="PTHR43661:SF3">
    <property type="entry name" value="D-XYLONATE DEHYDRATASE YAGF-RELATED"/>
    <property type="match status" value="1"/>
</dbReference>
<dbReference type="Pfam" id="PF24877">
    <property type="entry name" value="ILV_EDD_C"/>
    <property type="match status" value="1"/>
</dbReference>
<dbReference type="Pfam" id="PF00920">
    <property type="entry name" value="ILVD_EDD_N"/>
    <property type="match status" value="1"/>
</dbReference>
<dbReference type="SUPFAM" id="SSF143975">
    <property type="entry name" value="IlvD/EDD N-terminal domain-like"/>
    <property type="match status" value="1"/>
</dbReference>
<dbReference type="SUPFAM" id="SSF52016">
    <property type="entry name" value="LeuD/IlvD-like"/>
    <property type="match status" value="1"/>
</dbReference>
<dbReference type="PROSITE" id="PS00886">
    <property type="entry name" value="ILVD_EDD_1"/>
    <property type="match status" value="1"/>
</dbReference>
<dbReference type="PROSITE" id="PS00887">
    <property type="entry name" value="ILVD_EDD_2"/>
    <property type="match status" value="1"/>
</dbReference>
<accession>Q2J4D1</accession>
<name>ILVD_FRACC</name>
<comment type="function">
    <text evidence="1">Functions in the biosynthesis of branched-chain amino acids. Catalyzes the dehydration of (2R,3R)-2,3-dihydroxy-3-methylpentanoate (2,3-dihydroxy-3-methylvalerate) into 2-oxo-3-methylpentanoate (2-oxo-3-methylvalerate) and of (2R)-2,3-dihydroxy-3-methylbutanoate (2,3-dihydroxyisovalerate) into 2-oxo-3-methylbutanoate (2-oxoisovalerate), the penultimate precursor to L-isoleucine and L-valine, respectively.</text>
</comment>
<comment type="catalytic activity">
    <reaction evidence="1">
        <text>(2R)-2,3-dihydroxy-3-methylbutanoate = 3-methyl-2-oxobutanoate + H2O</text>
        <dbReference type="Rhea" id="RHEA:24809"/>
        <dbReference type="ChEBI" id="CHEBI:11851"/>
        <dbReference type="ChEBI" id="CHEBI:15377"/>
        <dbReference type="ChEBI" id="CHEBI:49072"/>
        <dbReference type="EC" id="4.2.1.9"/>
    </reaction>
    <physiologicalReaction direction="left-to-right" evidence="1">
        <dbReference type="Rhea" id="RHEA:24810"/>
    </physiologicalReaction>
</comment>
<comment type="catalytic activity">
    <reaction evidence="1">
        <text>(2R,3R)-2,3-dihydroxy-3-methylpentanoate = (S)-3-methyl-2-oxopentanoate + H2O</text>
        <dbReference type="Rhea" id="RHEA:27694"/>
        <dbReference type="ChEBI" id="CHEBI:15377"/>
        <dbReference type="ChEBI" id="CHEBI:35146"/>
        <dbReference type="ChEBI" id="CHEBI:49258"/>
        <dbReference type="EC" id="4.2.1.9"/>
    </reaction>
    <physiologicalReaction direction="left-to-right" evidence="1">
        <dbReference type="Rhea" id="RHEA:27695"/>
    </physiologicalReaction>
</comment>
<comment type="cofactor">
    <cofactor evidence="1">
        <name>[2Fe-2S] cluster</name>
        <dbReference type="ChEBI" id="CHEBI:190135"/>
    </cofactor>
    <text evidence="1">Binds 1 [2Fe-2S] cluster per subunit. This cluster acts as a Lewis acid cofactor.</text>
</comment>
<comment type="cofactor">
    <cofactor evidence="1">
        <name>Mg(2+)</name>
        <dbReference type="ChEBI" id="CHEBI:18420"/>
    </cofactor>
</comment>
<comment type="pathway">
    <text evidence="1">Amino-acid biosynthesis; L-isoleucine biosynthesis; L-isoleucine from 2-oxobutanoate: step 3/4.</text>
</comment>
<comment type="pathway">
    <text evidence="1">Amino-acid biosynthesis; L-valine biosynthesis; L-valine from pyruvate: step 3/4.</text>
</comment>
<comment type="subunit">
    <text evidence="1">Homodimer.</text>
</comment>
<comment type="similarity">
    <text evidence="1">Belongs to the IlvD/Edd family.</text>
</comment>
<evidence type="ECO:0000255" key="1">
    <source>
        <dbReference type="HAMAP-Rule" id="MF_00012"/>
    </source>
</evidence>
<keyword id="KW-0001">2Fe-2S</keyword>
<keyword id="KW-0028">Amino-acid biosynthesis</keyword>
<keyword id="KW-0100">Branched-chain amino acid biosynthesis</keyword>
<keyword id="KW-0408">Iron</keyword>
<keyword id="KW-0411">Iron-sulfur</keyword>
<keyword id="KW-0456">Lyase</keyword>
<keyword id="KW-0460">Magnesium</keyword>
<keyword id="KW-0479">Metal-binding</keyword>
<keyword id="KW-1185">Reference proteome</keyword>
<proteinExistence type="inferred from homology"/>
<feature type="chain" id="PRO_1000000983" description="Dihydroxy-acid dehydratase">
    <location>
        <begin position="1"/>
        <end position="617"/>
    </location>
</feature>
<feature type="active site" description="Proton acceptor" evidence="1">
    <location>
        <position position="520"/>
    </location>
</feature>
<feature type="binding site" evidence="1">
    <location>
        <position position="81"/>
    </location>
    <ligand>
        <name>Mg(2+)</name>
        <dbReference type="ChEBI" id="CHEBI:18420"/>
    </ligand>
</feature>
<feature type="binding site" evidence="1">
    <location>
        <position position="122"/>
    </location>
    <ligand>
        <name>[2Fe-2S] cluster</name>
        <dbReference type="ChEBI" id="CHEBI:190135"/>
    </ligand>
</feature>
<feature type="binding site" evidence="1">
    <location>
        <position position="123"/>
    </location>
    <ligand>
        <name>Mg(2+)</name>
        <dbReference type="ChEBI" id="CHEBI:18420"/>
    </ligand>
</feature>
<feature type="binding site" description="via carbamate group" evidence="1">
    <location>
        <position position="124"/>
    </location>
    <ligand>
        <name>Mg(2+)</name>
        <dbReference type="ChEBI" id="CHEBI:18420"/>
    </ligand>
</feature>
<feature type="binding site" evidence="1">
    <location>
        <position position="197"/>
    </location>
    <ligand>
        <name>[2Fe-2S] cluster</name>
        <dbReference type="ChEBI" id="CHEBI:190135"/>
    </ligand>
</feature>
<feature type="binding site" evidence="1">
    <location>
        <position position="494"/>
    </location>
    <ligand>
        <name>Mg(2+)</name>
        <dbReference type="ChEBI" id="CHEBI:18420"/>
    </ligand>
</feature>
<feature type="modified residue" description="N6-carboxylysine" evidence="1">
    <location>
        <position position="124"/>
    </location>
</feature>
<protein>
    <recommendedName>
        <fullName evidence="1">Dihydroxy-acid dehydratase</fullName>
        <shortName evidence="1">DAD</shortName>
        <ecNumber evidence="1">4.2.1.9</ecNumber>
    </recommendedName>
</protein>